<comment type="function">
    <text evidence="1">Catalyzes the isomerization between 2-isopropylmalate and 3-isopropylmalate, via the formation of 2-isopropylmaleate.</text>
</comment>
<comment type="catalytic activity">
    <reaction evidence="1">
        <text>(2R,3S)-3-isopropylmalate = (2S)-2-isopropylmalate</text>
        <dbReference type="Rhea" id="RHEA:32287"/>
        <dbReference type="ChEBI" id="CHEBI:1178"/>
        <dbReference type="ChEBI" id="CHEBI:35121"/>
        <dbReference type="EC" id="4.2.1.33"/>
    </reaction>
</comment>
<comment type="pathway">
    <text evidence="1">Amino-acid biosynthesis; L-leucine biosynthesis; L-leucine from 3-methyl-2-oxobutanoate: step 2/4.</text>
</comment>
<comment type="subunit">
    <text evidence="1">Heterodimer of LeuC and LeuD.</text>
</comment>
<comment type="similarity">
    <text evidence="1">Belongs to the LeuD family. LeuD type 1 subfamily.</text>
</comment>
<name>LEUD_STAAS</name>
<evidence type="ECO:0000255" key="1">
    <source>
        <dbReference type="HAMAP-Rule" id="MF_01031"/>
    </source>
</evidence>
<gene>
    <name evidence="1" type="primary">leuD</name>
    <name type="ordered locus">SAS1965</name>
</gene>
<proteinExistence type="inferred from homology"/>
<accession>Q6G7P8</accession>
<reference key="1">
    <citation type="journal article" date="2004" name="Proc. Natl. Acad. Sci. U.S.A.">
        <title>Complete genomes of two clinical Staphylococcus aureus strains: evidence for the rapid evolution of virulence and drug resistance.</title>
        <authorList>
            <person name="Holden M.T.G."/>
            <person name="Feil E.J."/>
            <person name="Lindsay J.A."/>
            <person name="Peacock S.J."/>
            <person name="Day N.P.J."/>
            <person name="Enright M.C."/>
            <person name="Foster T.J."/>
            <person name="Moore C.E."/>
            <person name="Hurst L."/>
            <person name="Atkin R."/>
            <person name="Barron A."/>
            <person name="Bason N."/>
            <person name="Bentley S.D."/>
            <person name="Chillingworth C."/>
            <person name="Chillingworth T."/>
            <person name="Churcher C."/>
            <person name="Clark L."/>
            <person name="Corton C."/>
            <person name="Cronin A."/>
            <person name="Doggett J."/>
            <person name="Dowd L."/>
            <person name="Feltwell T."/>
            <person name="Hance Z."/>
            <person name="Harris B."/>
            <person name="Hauser H."/>
            <person name="Holroyd S."/>
            <person name="Jagels K."/>
            <person name="James K.D."/>
            <person name="Lennard N."/>
            <person name="Line A."/>
            <person name="Mayes R."/>
            <person name="Moule S."/>
            <person name="Mungall K."/>
            <person name="Ormond D."/>
            <person name="Quail M.A."/>
            <person name="Rabbinowitsch E."/>
            <person name="Rutherford K.M."/>
            <person name="Sanders M."/>
            <person name="Sharp S."/>
            <person name="Simmonds M."/>
            <person name="Stevens K."/>
            <person name="Whitehead S."/>
            <person name="Barrell B.G."/>
            <person name="Spratt B.G."/>
            <person name="Parkhill J."/>
        </authorList>
    </citation>
    <scope>NUCLEOTIDE SEQUENCE [LARGE SCALE GENOMIC DNA]</scope>
    <source>
        <strain>MSSA476</strain>
    </source>
</reference>
<dbReference type="EC" id="4.2.1.33" evidence="1"/>
<dbReference type="EMBL" id="BX571857">
    <property type="protein sequence ID" value="CAG43772.1"/>
    <property type="molecule type" value="Genomic_DNA"/>
</dbReference>
<dbReference type="RefSeq" id="WP_000718948.1">
    <property type="nucleotide sequence ID" value="NC_002953.3"/>
</dbReference>
<dbReference type="SMR" id="Q6G7P8"/>
<dbReference type="KEGG" id="sas:SAS1965"/>
<dbReference type="HOGENOM" id="CLU_081378_0_3_9"/>
<dbReference type="UniPathway" id="UPA00048">
    <property type="reaction ID" value="UER00071"/>
</dbReference>
<dbReference type="GO" id="GO:0009316">
    <property type="term" value="C:3-isopropylmalate dehydratase complex"/>
    <property type="evidence" value="ECO:0007669"/>
    <property type="project" value="InterPro"/>
</dbReference>
<dbReference type="GO" id="GO:0003861">
    <property type="term" value="F:3-isopropylmalate dehydratase activity"/>
    <property type="evidence" value="ECO:0007669"/>
    <property type="project" value="UniProtKB-UniRule"/>
</dbReference>
<dbReference type="GO" id="GO:0009098">
    <property type="term" value="P:L-leucine biosynthetic process"/>
    <property type="evidence" value="ECO:0007669"/>
    <property type="project" value="UniProtKB-UniRule"/>
</dbReference>
<dbReference type="CDD" id="cd01577">
    <property type="entry name" value="IPMI_Swivel"/>
    <property type="match status" value="1"/>
</dbReference>
<dbReference type="FunFam" id="3.20.19.10:FF:000003">
    <property type="entry name" value="3-isopropylmalate dehydratase small subunit"/>
    <property type="match status" value="1"/>
</dbReference>
<dbReference type="Gene3D" id="3.20.19.10">
    <property type="entry name" value="Aconitase, domain 4"/>
    <property type="match status" value="1"/>
</dbReference>
<dbReference type="HAMAP" id="MF_01031">
    <property type="entry name" value="LeuD_type1"/>
    <property type="match status" value="1"/>
</dbReference>
<dbReference type="InterPro" id="IPR004431">
    <property type="entry name" value="3-IsopropMal_deHydase_ssu"/>
</dbReference>
<dbReference type="InterPro" id="IPR015928">
    <property type="entry name" value="Aconitase/3IPM_dehydase_swvl"/>
</dbReference>
<dbReference type="InterPro" id="IPR000573">
    <property type="entry name" value="AconitaseA/IPMdHydase_ssu_swvl"/>
</dbReference>
<dbReference type="InterPro" id="IPR033940">
    <property type="entry name" value="IPMI_Swivel"/>
</dbReference>
<dbReference type="InterPro" id="IPR050075">
    <property type="entry name" value="LeuD"/>
</dbReference>
<dbReference type="NCBIfam" id="TIGR00171">
    <property type="entry name" value="leuD"/>
    <property type="match status" value="1"/>
</dbReference>
<dbReference type="NCBIfam" id="NF002458">
    <property type="entry name" value="PRK01641.1"/>
    <property type="match status" value="1"/>
</dbReference>
<dbReference type="PANTHER" id="PTHR43345:SF5">
    <property type="entry name" value="3-ISOPROPYLMALATE DEHYDRATASE SMALL SUBUNIT"/>
    <property type="match status" value="1"/>
</dbReference>
<dbReference type="PANTHER" id="PTHR43345">
    <property type="entry name" value="3-ISOPROPYLMALATE DEHYDRATASE SMALL SUBUNIT 2-RELATED-RELATED"/>
    <property type="match status" value="1"/>
</dbReference>
<dbReference type="Pfam" id="PF00694">
    <property type="entry name" value="Aconitase_C"/>
    <property type="match status" value="1"/>
</dbReference>
<dbReference type="SUPFAM" id="SSF52016">
    <property type="entry name" value="LeuD/IlvD-like"/>
    <property type="match status" value="1"/>
</dbReference>
<organism>
    <name type="scientific">Staphylococcus aureus (strain MSSA476)</name>
    <dbReference type="NCBI Taxonomy" id="282459"/>
    <lineage>
        <taxon>Bacteria</taxon>
        <taxon>Bacillati</taxon>
        <taxon>Bacillota</taxon>
        <taxon>Bacilli</taxon>
        <taxon>Bacillales</taxon>
        <taxon>Staphylococcaceae</taxon>
        <taxon>Staphylococcus</taxon>
    </lineage>
</organism>
<keyword id="KW-0028">Amino-acid biosynthesis</keyword>
<keyword id="KW-0100">Branched-chain amino acid biosynthesis</keyword>
<keyword id="KW-0432">Leucine biosynthesis</keyword>
<keyword id="KW-0456">Lyase</keyword>
<protein>
    <recommendedName>
        <fullName evidence="1">3-isopropylmalate dehydratase small subunit</fullName>
        <ecNumber evidence="1">4.2.1.33</ecNumber>
    </recommendedName>
    <alternativeName>
        <fullName evidence="1">Alpha-IPM isomerase</fullName>
        <shortName evidence="1">IPMI</shortName>
    </alternativeName>
    <alternativeName>
        <fullName evidence="1">Isopropylmalate isomerase</fullName>
    </alternativeName>
</protein>
<sequence length="190" mass="21606">MAAIKPITTYKGKIVPLFNDNIDTDQIIPKVHLKRISKSGFGPFAFDEWRYLPDGSDNPDFNPNKPQYKGASILITGDNFGCGSSREHAAWALKDYGFHIIIAGSFSDIFYMNCTKNAMLPIVLEKNAREHLAKYVEIEVDLPNQTVSSPDKRFHFEIDETWKNKLVNGLDDIAITLQYESLIEKYEKSL</sequence>
<feature type="chain" id="PRO_0000141885" description="3-isopropylmalate dehydratase small subunit">
    <location>
        <begin position="1"/>
        <end position="190"/>
    </location>
</feature>